<sequence>MLFDAALLLSFGGPDGPEQVRPFLENVTRGCNVPPERLDEVTKHYLHFGGVSPINGINLALVNELQVELDLPVYFGNRNWEPYIEDSVVTMRDDGIRCAAVFITSAWSGYSSCTRYVEAIARARRRAGTGAPNLVKLRPYFDHPLFVEMFVDAITAAAASLPAALRSEARLVFTAHSVPVATDRRCGPALYSRQVGYAARLVAAGAGYADYDLTWQSRSGPPYVPWLAPDVGDQLMTLASAGTKAVIVCPIGFVADHIEVVWDLDHELRSQADAAGVAFARAATPNADRRFARLAASLIDELTHDRVPVRVNGSDPVPGCLASINGVPCDLPHCVA</sequence>
<evidence type="ECO:0000255" key="1">
    <source>
        <dbReference type="HAMAP-Rule" id="MF_00323"/>
    </source>
</evidence>
<proteinExistence type="inferred from homology"/>
<name>CPFC_MYCLB</name>
<gene>
    <name evidence="1" type="primary">cpfC</name>
    <name type="ordered locus">MLBr01805</name>
</gene>
<organism>
    <name type="scientific">Mycobacterium leprae (strain Br4923)</name>
    <dbReference type="NCBI Taxonomy" id="561304"/>
    <lineage>
        <taxon>Bacteria</taxon>
        <taxon>Bacillati</taxon>
        <taxon>Actinomycetota</taxon>
        <taxon>Actinomycetes</taxon>
        <taxon>Mycobacteriales</taxon>
        <taxon>Mycobacteriaceae</taxon>
        <taxon>Mycobacterium</taxon>
    </lineage>
</organism>
<dbReference type="EC" id="4.99.1.9" evidence="1"/>
<dbReference type="EMBL" id="FM211192">
    <property type="protein sequence ID" value="CAR71900.1"/>
    <property type="molecule type" value="Genomic_DNA"/>
</dbReference>
<dbReference type="SMR" id="B8ZS79"/>
<dbReference type="KEGG" id="mlb:MLBr01805"/>
<dbReference type="HOGENOM" id="CLU_018884_2_0_11"/>
<dbReference type="UniPathway" id="UPA00252"/>
<dbReference type="Proteomes" id="UP000006900">
    <property type="component" value="Chromosome"/>
</dbReference>
<dbReference type="GO" id="GO:0005737">
    <property type="term" value="C:cytoplasm"/>
    <property type="evidence" value="ECO:0007669"/>
    <property type="project" value="UniProtKB-SubCell"/>
</dbReference>
<dbReference type="GO" id="GO:0004325">
    <property type="term" value="F:ferrochelatase activity"/>
    <property type="evidence" value="ECO:0007669"/>
    <property type="project" value="UniProtKB-UniRule"/>
</dbReference>
<dbReference type="GO" id="GO:0046872">
    <property type="term" value="F:metal ion binding"/>
    <property type="evidence" value="ECO:0007669"/>
    <property type="project" value="UniProtKB-KW"/>
</dbReference>
<dbReference type="GO" id="GO:0006783">
    <property type="term" value="P:heme biosynthetic process"/>
    <property type="evidence" value="ECO:0007669"/>
    <property type="project" value="UniProtKB-UniRule"/>
</dbReference>
<dbReference type="CDD" id="cd00419">
    <property type="entry name" value="Ferrochelatase_C"/>
    <property type="match status" value="1"/>
</dbReference>
<dbReference type="CDD" id="cd03411">
    <property type="entry name" value="Ferrochelatase_N"/>
    <property type="match status" value="1"/>
</dbReference>
<dbReference type="Gene3D" id="3.40.50.1400">
    <property type="match status" value="2"/>
</dbReference>
<dbReference type="HAMAP" id="MF_00323">
    <property type="entry name" value="Ferrochelatase"/>
    <property type="match status" value="1"/>
</dbReference>
<dbReference type="InterPro" id="IPR001015">
    <property type="entry name" value="Ferrochelatase"/>
</dbReference>
<dbReference type="InterPro" id="IPR019772">
    <property type="entry name" value="Ferrochelatase_AS"/>
</dbReference>
<dbReference type="InterPro" id="IPR033644">
    <property type="entry name" value="Ferrochelatase_C"/>
</dbReference>
<dbReference type="InterPro" id="IPR033659">
    <property type="entry name" value="Ferrochelatase_N"/>
</dbReference>
<dbReference type="NCBIfam" id="TIGR00109">
    <property type="entry name" value="hemH"/>
    <property type="match status" value="1"/>
</dbReference>
<dbReference type="NCBIfam" id="NF000689">
    <property type="entry name" value="PRK00035.2-1"/>
    <property type="match status" value="1"/>
</dbReference>
<dbReference type="PANTHER" id="PTHR11108">
    <property type="entry name" value="FERROCHELATASE"/>
    <property type="match status" value="1"/>
</dbReference>
<dbReference type="PANTHER" id="PTHR11108:SF1">
    <property type="entry name" value="FERROCHELATASE, MITOCHONDRIAL"/>
    <property type="match status" value="1"/>
</dbReference>
<dbReference type="Pfam" id="PF00762">
    <property type="entry name" value="Ferrochelatase"/>
    <property type="match status" value="1"/>
</dbReference>
<dbReference type="SUPFAM" id="SSF53800">
    <property type="entry name" value="Chelatase"/>
    <property type="match status" value="1"/>
</dbReference>
<dbReference type="PROSITE" id="PS00534">
    <property type="entry name" value="FERROCHELATASE"/>
    <property type="match status" value="1"/>
</dbReference>
<comment type="function">
    <text evidence="1">Involved in coproporphyrin-dependent heme b biosynthesis. Catalyzes the insertion of ferrous iron into coproporphyrin III to form Fe-coproporphyrin III.</text>
</comment>
<comment type="catalytic activity">
    <reaction evidence="1">
        <text>Fe-coproporphyrin III + 2 H(+) = coproporphyrin III + Fe(2+)</text>
        <dbReference type="Rhea" id="RHEA:49572"/>
        <dbReference type="ChEBI" id="CHEBI:15378"/>
        <dbReference type="ChEBI" id="CHEBI:29033"/>
        <dbReference type="ChEBI" id="CHEBI:68438"/>
        <dbReference type="ChEBI" id="CHEBI:131725"/>
        <dbReference type="EC" id="4.99.1.9"/>
    </reaction>
    <physiologicalReaction direction="right-to-left" evidence="1">
        <dbReference type="Rhea" id="RHEA:49574"/>
    </physiologicalReaction>
</comment>
<comment type="pathway">
    <text evidence="1">Porphyrin-containing compound metabolism; protoheme biosynthesis.</text>
</comment>
<comment type="subcellular location">
    <subcellularLocation>
        <location evidence="1">Cytoplasm</location>
    </subcellularLocation>
</comment>
<comment type="similarity">
    <text evidence="1">Belongs to the ferrochelatase family.</text>
</comment>
<feature type="chain" id="PRO_1000189989" description="Coproporphyrin III ferrochelatase">
    <location>
        <begin position="1"/>
        <end position="336"/>
    </location>
</feature>
<feature type="binding site" evidence="1">
    <location>
        <position position="52"/>
    </location>
    <ligand>
        <name>Fe-coproporphyrin III</name>
        <dbReference type="ChEBI" id="CHEBI:68438"/>
    </ligand>
</feature>
<feature type="binding site" evidence="1">
    <location>
        <position position="116"/>
    </location>
    <ligand>
        <name>Fe-coproporphyrin III</name>
        <dbReference type="ChEBI" id="CHEBI:68438"/>
    </ligand>
</feature>
<feature type="binding site" evidence="1">
    <location>
        <position position="176"/>
    </location>
    <ligand>
        <name>Fe(2+)</name>
        <dbReference type="ChEBI" id="CHEBI:29033"/>
    </ligand>
</feature>
<feature type="binding site" evidence="1">
    <location>
        <position position="259"/>
    </location>
    <ligand>
        <name>Fe(2+)</name>
        <dbReference type="ChEBI" id="CHEBI:29033"/>
    </ligand>
</feature>
<keyword id="KW-0963">Cytoplasm</keyword>
<keyword id="KW-0350">Heme biosynthesis</keyword>
<keyword id="KW-0408">Iron</keyword>
<keyword id="KW-0456">Lyase</keyword>
<keyword id="KW-0479">Metal-binding</keyword>
<keyword id="KW-0627">Porphyrin biosynthesis</keyword>
<protein>
    <recommendedName>
        <fullName evidence="1">Coproporphyrin III ferrochelatase</fullName>
        <ecNumber evidence="1">4.99.1.9</ecNumber>
    </recommendedName>
</protein>
<accession>B8ZS79</accession>
<reference key="1">
    <citation type="journal article" date="2009" name="Nat. Genet.">
        <title>Comparative genomic and phylogeographic analysis of Mycobacterium leprae.</title>
        <authorList>
            <person name="Monot M."/>
            <person name="Honore N."/>
            <person name="Garnier T."/>
            <person name="Zidane N."/>
            <person name="Sherafi D."/>
            <person name="Paniz-Mondolfi A."/>
            <person name="Matsuoka M."/>
            <person name="Taylor G.M."/>
            <person name="Donoghue H.D."/>
            <person name="Bouwman A."/>
            <person name="Mays S."/>
            <person name="Watson C."/>
            <person name="Lockwood D."/>
            <person name="Khamispour A."/>
            <person name="Dowlati Y."/>
            <person name="Jianping S."/>
            <person name="Rea T.H."/>
            <person name="Vera-Cabrera L."/>
            <person name="Stefani M.M."/>
            <person name="Banu S."/>
            <person name="Macdonald M."/>
            <person name="Sapkota B.R."/>
            <person name="Spencer J.S."/>
            <person name="Thomas J."/>
            <person name="Harshman K."/>
            <person name="Singh P."/>
            <person name="Busso P."/>
            <person name="Gattiker A."/>
            <person name="Rougemont J."/>
            <person name="Brennan P.J."/>
            <person name="Cole S.T."/>
        </authorList>
    </citation>
    <scope>NUCLEOTIDE SEQUENCE [LARGE SCALE GENOMIC DNA]</scope>
    <source>
        <strain>Br4923</strain>
    </source>
</reference>